<accession>Q6ZMV7</accession>
<accession>D3DNK8</accession>
<accession>S4R3D4</accession>
<dbReference type="EMBL" id="AK131473">
    <property type="protein sequence ID" value="BAD18618.1"/>
    <property type="status" value="ALT_SEQ"/>
    <property type="molecule type" value="mRNA"/>
</dbReference>
<dbReference type="EMBL" id="AC106708">
    <property type="status" value="NOT_ANNOTATED_CDS"/>
    <property type="molecule type" value="Genomic_DNA"/>
</dbReference>
<dbReference type="EMBL" id="AC092993">
    <property type="status" value="NOT_ANNOTATED_CDS"/>
    <property type="molecule type" value="Genomic_DNA"/>
</dbReference>
<dbReference type="EMBL" id="AC117392">
    <property type="status" value="NOT_ANNOTATED_CDS"/>
    <property type="molecule type" value="Genomic_DNA"/>
</dbReference>
<dbReference type="EMBL" id="CH471052">
    <property type="protein sequence ID" value="EAW78719.1"/>
    <property type="molecule type" value="Genomic_DNA"/>
</dbReference>
<dbReference type="EMBL" id="CH471052">
    <property type="protein sequence ID" value="EAW78722.1"/>
    <property type="molecule type" value="Genomic_DNA"/>
</dbReference>
<dbReference type="EMBL" id="CH471052">
    <property type="protein sequence ID" value="EAW78721.1"/>
    <property type="molecule type" value="Genomic_DNA"/>
</dbReference>
<dbReference type="EMBL" id="BC041967">
    <property type="status" value="NOT_ANNOTATED_CDS"/>
    <property type="molecule type" value="mRNA"/>
</dbReference>
<dbReference type="CCDS" id="CCDS54660.1"/>
<dbReference type="RefSeq" id="NP_001180212.1">
    <property type="nucleotide sequence ID" value="NM_001193283.2"/>
</dbReference>
<dbReference type="RefSeq" id="XP_005247499.1">
    <property type="nucleotide sequence ID" value="XM_005247442.3"/>
</dbReference>
<dbReference type="SMR" id="Q6ZMV7"/>
<dbReference type="IntAct" id="Q6ZMV7">
    <property type="interactions" value="2"/>
</dbReference>
<dbReference type="STRING" id="9606.ENSP00000474182"/>
<dbReference type="BioMuta" id="LEKR1"/>
<dbReference type="DMDM" id="296434564"/>
<dbReference type="jPOST" id="Q6ZMV7"/>
<dbReference type="MassIVE" id="Q6ZMV7"/>
<dbReference type="PaxDb" id="9606-ENSP00000474182"/>
<dbReference type="PeptideAtlas" id="Q6ZMV7"/>
<dbReference type="ProteomicsDB" id="67922"/>
<dbReference type="Antibodypedia" id="63392">
    <property type="antibodies" value="23 antibodies from 10 providers"/>
</dbReference>
<dbReference type="DNASU" id="389170"/>
<dbReference type="Ensembl" id="ENST00000477399.5">
    <property type="protein sequence ID" value="ENSP00000425282.1"/>
    <property type="gene ID" value="ENSG00000197980.14"/>
</dbReference>
<dbReference type="Ensembl" id="ENST00000491763.1">
    <property type="protein sequence ID" value="ENSP00000474182.1"/>
    <property type="gene ID" value="ENSG00000197980.14"/>
</dbReference>
<dbReference type="GeneID" id="389170"/>
<dbReference type="KEGG" id="hsa:389170"/>
<dbReference type="UCSC" id="uc003fba.2">
    <property type="organism name" value="human"/>
</dbReference>
<dbReference type="AGR" id="HGNC:33765"/>
<dbReference type="CTD" id="389170"/>
<dbReference type="DisGeNET" id="389170"/>
<dbReference type="GeneCards" id="LEKR1"/>
<dbReference type="HGNC" id="HGNC:33765">
    <property type="gene designation" value="LEKR1"/>
</dbReference>
<dbReference type="HPA" id="ENSG00000197980">
    <property type="expression patterns" value="Tissue enhanced (testis)"/>
</dbReference>
<dbReference type="MIM" id="613536">
    <property type="type" value="gene"/>
</dbReference>
<dbReference type="neXtProt" id="NX_Q6ZMV7"/>
<dbReference type="OpenTargets" id="ENSG00000197980"/>
<dbReference type="VEuPathDB" id="HostDB:ENSG00000197980"/>
<dbReference type="GeneTree" id="ENSGT00940000162647"/>
<dbReference type="HOGENOM" id="CLU_030933_1_0_1"/>
<dbReference type="InParanoid" id="Q6ZMV7"/>
<dbReference type="OrthoDB" id="10256467at2759"/>
<dbReference type="PAN-GO" id="Q6ZMV7">
    <property type="GO annotations" value="0 GO annotations based on evolutionary models"/>
</dbReference>
<dbReference type="PhylomeDB" id="Q6ZMV7"/>
<dbReference type="TreeFam" id="TF344195"/>
<dbReference type="PathwayCommons" id="Q6ZMV7"/>
<dbReference type="SignaLink" id="Q6ZMV7"/>
<dbReference type="ChiTaRS" id="LEKR1">
    <property type="organism name" value="human"/>
</dbReference>
<dbReference type="Pharos" id="Q6ZMV7">
    <property type="development level" value="Tdark"/>
</dbReference>
<dbReference type="PRO" id="PR:Q6ZMV7"/>
<dbReference type="Proteomes" id="UP000005640">
    <property type="component" value="Chromosome 3"/>
</dbReference>
<dbReference type="RNAct" id="Q6ZMV7">
    <property type="molecule type" value="protein"/>
</dbReference>
<dbReference type="Bgee" id="ENSG00000197980">
    <property type="expression patterns" value="Expressed in buccal mucosa cell and 102 other cell types or tissues"/>
</dbReference>
<dbReference type="ExpressionAtlas" id="Q6ZMV7">
    <property type="expression patterns" value="baseline and differential"/>
</dbReference>
<dbReference type="InterPro" id="IPR038799">
    <property type="entry name" value="LEKR1"/>
</dbReference>
<dbReference type="PANTHER" id="PTHR34251:SF1">
    <property type="entry name" value="LEUCINE, GLUTAMATE AND LYSINE RICH 1"/>
    <property type="match status" value="1"/>
</dbReference>
<dbReference type="PANTHER" id="PTHR34251">
    <property type="entry name" value="LEUCINE-, GLUTAMATE- AND LYSINE-RICH PROTEIN 1"/>
    <property type="match status" value="1"/>
</dbReference>
<comment type="sequence caution" evidence="2">
    <conflict type="miscellaneous discrepancy">
        <sequence resource="EMBL-CDS" id="BAD18618"/>
    </conflict>
</comment>
<feature type="chain" id="PRO_0000325711" description="Protein LEKR1">
    <location>
        <begin position="1"/>
        <end position="132"/>
    </location>
</feature>
<feature type="coiled-coil region" evidence="1">
    <location>
        <begin position="37"/>
        <end position="116"/>
    </location>
</feature>
<gene>
    <name type="primary">LEKR1</name>
</gene>
<protein>
    <recommendedName>
        <fullName evidence="2">Protein LEKR1</fullName>
    </recommendedName>
</protein>
<sequence>MDHHIPMHALPEEIQKMLPEEKVCKYCGVSYLILHEFKAMEEKVKAMEKEMKFYQGSVDREKRLQEKLHSLSQELEQYKIDNKSKTERIYDVGMQLKSQQNEFQKVKKQLSHLQDELKIKYRQSYIFRLCFC</sequence>
<evidence type="ECO:0000255" key="1"/>
<evidence type="ECO:0000305" key="2"/>
<proteinExistence type="evidence at transcript level"/>
<keyword id="KW-0175">Coiled coil</keyword>
<keyword id="KW-1185">Reference proteome</keyword>
<reference key="1">
    <citation type="journal article" date="2004" name="Nat. Genet.">
        <title>Complete sequencing and characterization of 21,243 full-length human cDNAs.</title>
        <authorList>
            <person name="Ota T."/>
            <person name="Suzuki Y."/>
            <person name="Nishikawa T."/>
            <person name="Otsuki T."/>
            <person name="Sugiyama T."/>
            <person name="Irie R."/>
            <person name="Wakamatsu A."/>
            <person name="Hayashi K."/>
            <person name="Sato H."/>
            <person name="Nagai K."/>
            <person name="Kimura K."/>
            <person name="Makita H."/>
            <person name="Sekine M."/>
            <person name="Obayashi M."/>
            <person name="Nishi T."/>
            <person name="Shibahara T."/>
            <person name="Tanaka T."/>
            <person name="Ishii S."/>
            <person name="Yamamoto J."/>
            <person name="Saito K."/>
            <person name="Kawai Y."/>
            <person name="Isono Y."/>
            <person name="Nakamura Y."/>
            <person name="Nagahari K."/>
            <person name="Murakami K."/>
            <person name="Yasuda T."/>
            <person name="Iwayanagi T."/>
            <person name="Wagatsuma M."/>
            <person name="Shiratori A."/>
            <person name="Sudo H."/>
            <person name="Hosoiri T."/>
            <person name="Kaku Y."/>
            <person name="Kodaira H."/>
            <person name="Kondo H."/>
            <person name="Sugawara M."/>
            <person name="Takahashi M."/>
            <person name="Kanda K."/>
            <person name="Yokoi T."/>
            <person name="Furuya T."/>
            <person name="Kikkawa E."/>
            <person name="Omura Y."/>
            <person name="Abe K."/>
            <person name="Kamihara K."/>
            <person name="Katsuta N."/>
            <person name="Sato K."/>
            <person name="Tanikawa M."/>
            <person name="Yamazaki M."/>
            <person name="Ninomiya K."/>
            <person name="Ishibashi T."/>
            <person name="Yamashita H."/>
            <person name="Murakawa K."/>
            <person name="Fujimori K."/>
            <person name="Tanai H."/>
            <person name="Kimata M."/>
            <person name="Watanabe M."/>
            <person name="Hiraoka S."/>
            <person name="Chiba Y."/>
            <person name="Ishida S."/>
            <person name="Ono Y."/>
            <person name="Takiguchi S."/>
            <person name="Watanabe S."/>
            <person name="Yosida M."/>
            <person name="Hotuta T."/>
            <person name="Kusano J."/>
            <person name="Kanehori K."/>
            <person name="Takahashi-Fujii A."/>
            <person name="Hara H."/>
            <person name="Tanase T.-O."/>
            <person name="Nomura Y."/>
            <person name="Togiya S."/>
            <person name="Komai F."/>
            <person name="Hara R."/>
            <person name="Takeuchi K."/>
            <person name="Arita M."/>
            <person name="Imose N."/>
            <person name="Musashino K."/>
            <person name="Yuuki H."/>
            <person name="Oshima A."/>
            <person name="Sasaki N."/>
            <person name="Aotsuka S."/>
            <person name="Yoshikawa Y."/>
            <person name="Matsunawa H."/>
            <person name="Ichihara T."/>
            <person name="Shiohata N."/>
            <person name="Sano S."/>
            <person name="Moriya S."/>
            <person name="Momiyama H."/>
            <person name="Satoh N."/>
            <person name="Takami S."/>
            <person name="Terashima Y."/>
            <person name="Suzuki O."/>
            <person name="Nakagawa S."/>
            <person name="Senoh A."/>
            <person name="Mizoguchi H."/>
            <person name="Goto Y."/>
            <person name="Shimizu F."/>
            <person name="Wakebe H."/>
            <person name="Hishigaki H."/>
            <person name="Watanabe T."/>
            <person name="Sugiyama A."/>
            <person name="Takemoto M."/>
            <person name="Kawakami B."/>
            <person name="Yamazaki M."/>
            <person name="Watanabe K."/>
            <person name="Kumagai A."/>
            <person name="Itakura S."/>
            <person name="Fukuzumi Y."/>
            <person name="Fujimori Y."/>
            <person name="Komiyama M."/>
            <person name="Tashiro H."/>
            <person name="Tanigami A."/>
            <person name="Fujiwara T."/>
            <person name="Ono T."/>
            <person name="Yamada K."/>
            <person name="Fujii Y."/>
            <person name="Ozaki K."/>
            <person name="Hirao M."/>
            <person name="Ohmori Y."/>
            <person name="Kawabata A."/>
            <person name="Hikiji T."/>
            <person name="Kobatake N."/>
            <person name="Inagaki H."/>
            <person name="Ikema Y."/>
            <person name="Okamoto S."/>
            <person name="Okitani R."/>
            <person name="Kawakami T."/>
            <person name="Noguchi S."/>
            <person name="Itoh T."/>
            <person name="Shigeta K."/>
            <person name="Senba T."/>
            <person name="Matsumura K."/>
            <person name="Nakajima Y."/>
            <person name="Mizuno T."/>
            <person name="Morinaga M."/>
            <person name="Sasaki M."/>
            <person name="Togashi T."/>
            <person name="Oyama M."/>
            <person name="Hata H."/>
            <person name="Watanabe M."/>
            <person name="Komatsu T."/>
            <person name="Mizushima-Sugano J."/>
            <person name="Satoh T."/>
            <person name="Shirai Y."/>
            <person name="Takahashi Y."/>
            <person name="Nakagawa K."/>
            <person name="Okumura K."/>
            <person name="Nagase T."/>
            <person name="Nomura N."/>
            <person name="Kikuchi H."/>
            <person name="Masuho Y."/>
            <person name="Yamashita R."/>
            <person name="Nakai K."/>
            <person name="Yada T."/>
            <person name="Nakamura Y."/>
            <person name="Ohara O."/>
            <person name="Isogai T."/>
            <person name="Sugano S."/>
        </authorList>
    </citation>
    <scope>NUCLEOTIDE SEQUENCE [LARGE SCALE MRNA]</scope>
    <source>
        <tissue>Testis</tissue>
    </source>
</reference>
<reference key="2">
    <citation type="journal article" date="2006" name="Nature">
        <title>The DNA sequence, annotation and analysis of human chromosome 3.</title>
        <authorList>
            <person name="Muzny D.M."/>
            <person name="Scherer S.E."/>
            <person name="Kaul R."/>
            <person name="Wang J."/>
            <person name="Yu J."/>
            <person name="Sudbrak R."/>
            <person name="Buhay C.J."/>
            <person name="Chen R."/>
            <person name="Cree A."/>
            <person name="Ding Y."/>
            <person name="Dugan-Rocha S."/>
            <person name="Gill R."/>
            <person name="Gunaratne P."/>
            <person name="Harris R.A."/>
            <person name="Hawes A.C."/>
            <person name="Hernandez J."/>
            <person name="Hodgson A.V."/>
            <person name="Hume J."/>
            <person name="Jackson A."/>
            <person name="Khan Z.M."/>
            <person name="Kovar-Smith C."/>
            <person name="Lewis L.R."/>
            <person name="Lozado R.J."/>
            <person name="Metzker M.L."/>
            <person name="Milosavljevic A."/>
            <person name="Miner G.R."/>
            <person name="Morgan M.B."/>
            <person name="Nazareth L.V."/>
            <person name="Scott G."/>
            <person name="Sodergren E."/>
            <person name="Song X.-Z."/>
            <person name="Steffen D."/>
            <person name="Wei S."/>
            <person name="Wheeler D.A."/>
            <person name="Wright M.W."/>
            <person name="Worley K.C."/>
            <person name="Yuan Y."/>
            <person name="Zhang Z."/>
            <person name="Adams C.Q."/>
            <person name="Ansari-Lari M.A."/>
            <person name="Ayele M."/>
            <person name="Brown M.J."/>
            <person name="Chen G."/>
            <person name="Chen Z."/>
            <person name="Clendenning J."/>
            <person name="Clerc-Blankenburg K.P."/>
            <person name="Chen R."/>
            <person name="Chen Z."/>
            <person name="Davis C."/>
            <person name="Delgado O."/>
            <person name="Dinh H.H."/>
            <person name="Dong W."/>
            <person name="Draper H."/>
            <person name="Ernst S."/>
            <person name="Fu G."/>
            <person name="Gonzalez-Garay M.L."/>
            <person name="Garcia D.K."/>
            <person name="Gillett W."/>
            <person name="Gu J."/>
            <person name="Hao B."/>
            <person name="Haugen E."/>
            <person name="Havlak P."/>
            <person name="He X."/>
            <person name="Hennig S."/>
            <person name="Hu S."/>
            <person name="Huang W."/>
            <person name="Jackson L.R."/>
            <person name="Jacob L.S."/>
            <person name="Kelly S.H."/>
            <person name="Kube M."/>
            <person name="Levy R."/>
            <person name="Li Z."/>
            <person name="Liu B."/>
            <person name="Liu J."/>
            <person name="Liu W."/>
            <person name="Lu J."/>
            <person name="Maheshwari M."/>
            <person name="Nguyen B.-V."/>
            <person name="Okwuonu G.O."/>
            <person name="Palmeiri A."/>
            <person name="Pasternak S."/>
            <person name="Perez L.M."/>
            <person name="Phelps K.A."/>
            <person name="Plopper F.J."/>
            <person name="Qiang B."/>
            <person name="Raymond C."/>
            <person name="Rodriguez R."/>
            <person name="Saenphimmachak C."/>
            <person name="Santibanez J."/>
            <person name="Shen H."/>
            <person name="Shen Y."/>
            <person name="Subramanian S."/>
            <person name="Tabor P.E."/>
            <person name="Verduzco D."/>
            <person name="Waldron L."/>
            <person name="Wang J."/>
            <person name="Wang J."/>
            <person name="Wang Q."/>
            <person name="Williams G.A."/>
            <person name="Wong G.K.-S."/>
            <person name="Yao Z."/>
            <person name="Zhang J."/>
            <person name="Zhang X."/>
            <person name="Zhao G."/>
            <person name="Zhou J."/>
            <person name="Zhou Y."/>
            <person name="Nelson D."/>
            <person name="Lehrach H."/>
            <person name="Reinhardt R."/>
            <person name="Naylor S.L."/>
            <person name="Yang H."/>
            <person name="Olson M."/>
            <person name="Weinstock G."/>
            <person name="Gibbs R.A."/>
        </authorList>
    </citation>
    <scope>NUCLEOTIDE SEQUENCE [LARGE SCALE GENOMIC DNA]</scope>
</reference>
<reference key="3">
    <citation type="submission" date="2005-09" db="EMBL/GenBank/DDBJ databases">
        <authorList>
            <person name="Mural R.J."/>
            <person name="Istrail S."/>
            <person name="Sutton G.G."/>
            <person name="Florea L."/>
            <person name="Halpern A.L."/>
            <person name="Mobarry C.M."/>
            <person name="Lippert R."/>
            <person name="Walenz B."/>
            <person name="Shatkay H."/>
            <person name="Dew I."/>
            <person name="Miller J.R."/>
            <person name="Flanigan M.J."/>
            <person name="Edwards N.J."/>
            <person name="Bolanos R."/>
            <person name="Fasulo D."/>
            <person name="Halldorsson B.V."/>
            <person name="Hannenhalli S."/>
            <person name="Turner R."/>
            <person name="Yooseph S."/>
            <person name="Lu F."/>
            <person name="Nusskern D.R."/>
            <person name="Shue B.C."/>
            <person name="Zheng X.H."/>
            <person name="Zhong F."/>
            <person name="Delcher A.L."/>
            <person name="Huson D.H."/>
            <person name="Kravitz S.A."/>
            <person name="Mouchard L."/>
            <person name="Reinert K."/>
            <person name="Remington K.A."/>
            <person name="Clark A.G."/>
            <person name="Waterman M.S."/>
            <person name="Eichler E.E."/>
            <person name="Adams M.D."/>
            <person name="Hunkapiller M.W."/>
            <person name="Myers E.W."/>
            <person name="Venter J.C."/>
        </authorList>
    </citation>
    <scope>NUCLEOTIDE SEQUENCE [LARGE SCALE GENOMIC DNA]</scope>
</reference>
<reference key="4">
    <citation type="journal article" date="2004" name="Genome Res.">
        <title>The status, quality, and expansion of the NIH full-length cDNA project: the Mammalian Gene Collection (MGC).</title>
        <authorList>
            <consortium name="The MGC Project Team"/>
        </authorList>
    </citation>
    <scope>NUCLEOTIDE SEQUENCE [LARGE SCALE MRNA]</scope>
</reference>
<organism>
    <name type="scientific">Homo sapiens</name>
    <name type="common">Human</name>
    <dbReference type="NCBI Taxonomy" id="9606"/>
    <lineage>
        <taxon>Eukaryota</taxon>
        <taxon>Metazoa</taxon>
        <taxon>Chordata</taxon>
        <taxon>Craniata</taxon>
        <taxon>Vertebrata</taxon>
        <taxon>Euteleostomi</taxon>
        <taxon>Mammalia</taxon>
        <taxon>Eutheria</taxon>
        <taxon>Euarchontoglires</taxon>
        <taxon>Primates</taxon>
        <taxon>Haplorrhini</taxon>
        <taxon>Catarrhini</taxon>
        <taxon>Hominidae</taxon>
        <taxon>Homo</taxon>
    </lineage>
</organism>
<name>LEKR1_HUMAN</name>